<dbReference type="EMBL" id="DS995899">
    <property type="protein sequence ID" value="EEA28942.1"/>
    <property type="molecule type" value="Genomic_DNA"/>
</dbReference>
<dbReference type="RefSeq" id="XP_002145457.1">
    <property type="nucleotide sequence ID" value="XM_002145421.1"/>
</dbReference>
<dbReference type="SMR" id="B6Q1T9"/>
<dbReference type="STRING" id="441960.B6Q1T9"/>
<dbReference type="VEuPathDB" id="FungiDB:PMAA_037280"/>
<dbReference type="HOGENOM" id="CLU_002794_4_1_1"/>
<dbReference type="OrthoDB" id="4298at28568"/>
<dbReference type="PhylomeDB" id="B6Q1T9"/>
<dbReference type="Proteomes" id="UP000001294">
    <property type="component" value="Unassembled WGS sequence"/>
</dbReference>
<dbReference type="GO" id="GO:0005739">
    <property type="term" value="C:mitochondrion"/>
    <property type="evidence" value="ECO:0007669"/>
    <property type="project" value="UniProtKB-SubCell"/>
</dbReference>
<dbReference type="GO" id="GO:0005525">
    <property type="term" value="F:GTP binding"/>
    <property type="evidence" value="ECO:0007669"/>
    <property type="project" value="UniProtKB-UniRule"/>
</dbReference>
<dbReference type="GO" id="GO:0003924">
    <property type="term" value="F:GTPase activity"/>
    <property type="evidence" value="ECO:0007669"/>
    <property type="project" value="UniProtKB-UniRule"/>
</dbReference>
<dbReference type="GO" id="GO:0032543">
    <property type="term" value="P:mitochondrial translation"/>
    <property type="evidence" value="ECO:0007669"/>
    <property type="project" value="UniProtKB-UniRule"/>
</dbReference>
<dbReference type="GO" id="GO:0032790">
    <property type="term" value="P:ribosome disassembly"/>
    <property type="evidence" value="ECO:0007669"/>
    <property type="project" value="UniProtKB-UniRule"/>
</dbReference>
<dbReference type="CDD" id="cd01886">
    <property type="entry name" value="EF-G"/>
    <property type="match status" value="1"/>
</dbReference>
<dbReference type="CDD" id="cd16262">
    <property type="entry name" value="EFG_III"/>
    <property type="match status" value="1"/>
</dbReference>
<dbReference type="CDD" id="cd03713">
    <property type="entry name" value="EFG_mtEFG_C"/>
    <property type="match status" value="1"/>
</dbReference>
<dbReference type="FunFam" id="2.40.30.10:FF:000106">
    <property type="entry name" value="Ribosome-releasing factor 2, mitochondrial"/>
    <property type="match status" value="1"/>
</dbReference>
<dbReference type="FunFam" id="3.30.70.870:FF:000007">
    <property type="entry name" value="Ribosome-releasing factor 2, mitochondrial"/>
    <property type="match status" value="1"/>
</dbReference>
<dbReference type="FunFam" id="3.40.50.300:FF:001636">
    <property type="entry name" value="Ribosome-releasing factor 2, mitochondrial"/>
    <property type="match status" value="1"/>
</dbReference>
<dbReference type="Gene3D" id="3.30.230.10">
    <property type="match status" value="1"/>
</dbReference>
<dbReference type="Gene3D" id="3.30.70.240">
    <property type="match status" value="1"/>
</dbReference>
<dbReference type="Gene3D" id="3.30.70.870">
    <property type="entry name" value="Elongation Factor G (Translational Gtpase), domain 3"/>
    <property type="match status" value="1"/>
</dbReference>
<dbReference type="Gene3D" id="3.40.50.300">
    <property type="entry name" value="P-loop containing nucleotide triphosphate hydrolases"/>
    <property type="match status" value="1"/>
</dbReference>
<dbReference type="Gene3D" id="2.40.30.10">
    <property type="entry name" value="Translation factors"/>
    <property type="match status" value="1"/>
</dbReference>
<dbReference type="HAMAP" id="MF_03059">
    <property type="entry name" value="mEF_G_2"/>
    <property type="match status" value="1"/>
</dbReference>
<dbReference type="InterPro" id="IPR053905">
    <property type="entry name" value="EF-G-like_DII"/>
</dbReference>
<dbReference type="InterPro" id="IPR030851">
    <property type="entry name" value="EFG2"/>
</dbReference>
<dbReference type="InterPro" id="IPR041095">
    <property type="entry name" value="EFG_II"/>
</dbReference>
<dbReference type="InterPro" id="IPR009022">
    <property type="entry name" value="EFG_III"/>
</dbReference>
<dbReference type="InterPro" id="IPR035647">
    <property type="entry name" value="EFG_III/V"/>
</dbReference>
<dbReference type="InterPro" id="IPR035649">
    <property type="entry name" value="EFG_V"/>
</dbReference>
<dbReference type="InterPro" id="IPR000640">
    <property type="entry name" value="EFG_V-like"/>
</dbReference>
<dbReference type="InterPro" id="IPR031157">
    <property type="entry name" value="G_TR_CS"/>
</dbReference>
<dbReference type="InterPro" id="IPR027417">
    <property type="entry name" value="P-loop_NTPase"/>
</dbReference>
<dbReference type="InterPro" id="IPR020568">
    <property type="entry name" value="Ribosomal_Su5_D2-typ_SF"/>
</dbReference>
<dbReference type="InterPro" id="IPR014721">
    <property type="entry name" value="Ribsml_uS5_D2-typ_fold_subgr"/>
</dbReference>
<dbReference type="InterPro" id="IPR005225">
    <property type="entry name" value="Small_GTP-bd"/>
</dbReference>
<dbReference type="InterPro" id="IPR000795">
    <property type="entry name" value="T_Tr_GTP-bd_dom"/>
</dbReference>
<dbReference type="InterPro" id="IPR009000">
    <property type="entry name" value="Transl_B-barrel_sf"/>
</dbReference>
<dbReference type="NCBIfam" id="TIGR00231">
    <property type="entry name" value="small_GTP"/>
    <property type="match status" value="1"/>
</dbReference>
<dbReference type="PANTHER" id="PTHR43261:SF1">
    <property type="entry name" value="RIBOSOME-RELEASING FACTOR 2, MITOCHONDRIAL"/>
    <property type="match status" value="1"/>
</dbReference>
<dbReference type="PANTHER" id="PTHR43261">
    <property type="entry name" value="TRANSLATION ELONGATION FACTOR G-RELATED"/>
    <property type="match status" value="1"/>
</dbReference>
<dbReference type="Pfam" id="PF22042">
    <property type="entry name" value="EF-G_D2"/>
    <property type="match status" value="1"/>
</dbReference>
<dbReference type="Pfam" id="PF00679">
    <property type="entry name" value="EFG_C"/>
    <property type="match status" value="1"/>
</dbReference>
<dbReference type="Pfam" id="PF14492">
    <property type="entry name" value="EFG_III"/>
    <property type="match status" value="1"/>
</dbReference>
<dbReference type="Pfam" id="PF00009">
    <property type="entry name" value="GTP_EFTU"/>
    <property type="match status" value="1"/>
</dbReference>
<dbReference type="PRINTS" id="PR00315">
    <property type="entry name" value="ELONGATNFCT"/>
</dbReference>
<dbReference type="SMART" id="SM00838">
    <property type="entry name" value="EFG_C"/>
    <property type="match status" value="1"/>
</dbReference>
<dbReference type="SUPFAM" id="SSF54980">
    <property type="entry name" value="EF-G C-terminal domain-like"/>
    <property type="match status" value="2"/>
</dbReference>
<dbReference type="SUPFAM" id="SSF52540">
    <property type="entry name" value="P-loop containing nucleoside triphosphate hydrolases"/>
    <property type="match status" value="1"/>
</dbReference>
<dbReference type="SUPFAM" id="SSF54211">
    <property type="entry name" value="Ribosomal protein S5 domain 2-like"/>
    <property type="match status" value="1"/>
</dbReference>
<dbReference type="SUPFAM" id="SSF50447">
    <property type="entry name" value="Translation proteins"/>
    <property type="match status" value="1"/>
</dbReference>
<dbReference type="PROSITE" id="PS00301">
    <property type="entry name" value="G_TR_1"/>
    <property type="match status" value="1"/>
</dbReference>
<dbReference type="PROSITE" id="PS51722">
    <property type="entry name" value="G_TR_2"/>
    <property type="match status" value="1"/>
</dbReference>
<accession>B6Q1T9</accession>
<protein>
    <recommendedName>
        <fullName evidence="1">Ribosome-releasing factor 2, mitochondrial</fullName>
        <shortName evidence="1">RRF2mt</shortName>
    </recommendedName>
    <alternativeName>
        <fullName evidence="1">Elongation factor G 2, mitochondrial</fullName>
        <shortName evidence="1">EF-G2mt</shortName>
        <shortName evidence="1">mEF-G 2</shortName>
    </alternativeName>
</protein>
<comment type="function">
    <text evidence="1">Mitochondrial GTPase that mediates the disassembly of ribosomes from messenger RNA at the termination of mitochondrial protein biosynthesis. Not involved in the GTP-dependent ribosomal translocation step during translation elongation.</text>
</comment>
<comment type="subcellular location">
    <subcellularLocation>
        <location evidence="1">Mitochondrion</location>
    </subcellularLocation>
</comment>
<comment type="similarity">
    <text evidence="1">Belongs to the TRAFAC class translation factor GTPase superfamily. Classic translation factor GTPase family. EF-G/EF-2 subfamily.</text>
</comment>
<proteinExistence type="inferred from homology"/>
<feature type="transit peptide" description="Mitochondrion" evidence="1">
    <location>
        <begin position="1"/>
        <end position="57"/>
    </location>
</feature>
<feature type="chain" id="PRO_0000385618" description="Ribosome-releasing factor 2, mitochondrial">
    <location>
        <begin position="58"/>
        <end position="927"/>
    </location>
</feature>
<feature type="domain" description="tr-type G">
    <location>
        <begin position="64"/>
        <end position="379"/>
    </location>
</feature>
<feature type="binding site" evidence="1">
    <location>
        <begin position="73"/>
        <end position="80"/>
    </location>
    <ligand>
        <name>GTP</name>
        <dbReference type="ChEBI" id="CHEBI:37565"/>
    </ligand>
</feature>
<feature type="binding site" evidence="1">
    <location>
        <begin position="163"/>
        <end position="167"/>
    </location>
    <ligand>
        <name>GTP</name>
        <dbReference type="ChEBI" id="CHEBI:37565"/>
    </ligand>
</feature>
<feature type="binding site" evidence="1">
    <location>
        <begin position="217"/>
        <end position="220"/>
    </location>
    <ligand>
        <name>GTP</name>
        <dbReference type="ChEBI" id="CHEBI:37565"/>
    </ligand>
</feature>
<reference key="1">
    <citation type="journal article" date="2015" name="Genome Announc.">
        <title>Genome sequence of the AIDS-associated pathogen Penicillium marneffei (ATCC18224) and its near taxonomic relative Talaromyces stipitatus (ATCC10500).</title>
        <authorList>
            <person name="Nierman W.C."/>
            <person name="Fedorova-Abrams N.D."/>
            <person name="Andrianopoulos A."/>
        </authorList>
    </citation>
    <scope>NUCLEOTIDE SEQUENCE [LARGE SCALE GENOMIC DNA]</scope>
    <source>
        <strain>ATCC 18224 / CBS 334.59 / QM 7333</strain>
    </source>
</reference>
<keyword id="KW-0342">GTP-binding</keyword>
<keyword id="KW-0496">Mitochondrion</keyword>
<keyword id="KW-0547">Nucleotide-binding</keyword>
<keyword id="KW-0648">Protein biosynthesis</keyword>
<keyword id="KW-1185">Reference proteome</keyword>
<keyword id="KW-0809">Transit peptide</keyword>
<gene>
    <name type="primary">mef2</name>
    <name type="ORF">PMAA_037280</name>
</gene>
<organism>
    <name type="scientific">Talaromyces marneffei (strain ATCC 18224 / CBS 334.59 / QM 7333)</name>
    <name type="common">Penicillium marneffei</name>
    <dbReference type="NCBI Taxonomy" id="441960"/>
    <lineage>
        <taxon>Eukaryota</taxon>
        <taxon>Fungi</taxon>
        <taxon>Dikarya</taxon>
        <taxon>Ascomycota</taxon>
        <taxon>Pezizomycotina</taxon>
        <taxon>Eurotiomycetes</taxon>
        <taxon>Eurotiomycetidae</taxon>
        <taxon>Eurotiales</taxon>
        <taxon>Trichocomaceae</taxon>
        <taxon>Talaromyces</taxon>
        <taxon>Talaromyces sect. Talaromyces</taxon>
    </lineage>
</organism>
<sequence>MVTAPLLGWVAVRPIPRLSKLNTCKYVSSSLQSYKRSVGSCLGKQQSRDFSYSATLTDAGINLEKTRNIGIIAHIDAGKTTTTERMLYYSGFTRRIGDVDDGSTVTDFLPAERARGITIQSAAITFHWPPLAADGTSSGPSLEELESQNLPRSRASHTVNLIDTPGHADFTFEVLRSLRILDGAVCILDGVAGVEAQTEKVWHQASVYQIPRVVYVNKLDRDGAAFGRTVREVGSRLQGWPAVCQIPWFEGGNGRFTGIADVISLQGLLWKEGGDGKSVKVFDLAGLENEDKRLAEELKHARVALVELLSEHDEDMVESFFEHEDHLKVPPMTILKSLRKCLLGPEAQKIIPVFAGSSFRNMGVQPLLDAVNNLLPGPSESVDPEISLGNSKGSLGNLLSGELTLQQEPKTANIAKPKQKKKTAVAPTSVDTKHLAANLESCALAFKVVSDAKRGVLVYVRVYSGTLNKGCQLYNTNLHVTERAPRLFKMYANDAVEVDSIPAGHIGVVSGLKYARTGDTLISCTGSKMTPPEPLNTLQLRPIDVPPPVFFASIEPHSLSEEKNMQEALALLLREDPSLHVTVDEDSGQTLLSGMGELHLEIARDRLVNDFKAKATMGRIEIGYRECVLGQSNPVTKIFDREVAGRKGKAGCTAVVEPYDPESGEPSSGGEDIIFAEIVEGNRIIISAPGINISTDKRGKEESSSLPSQFDVNSFRTSLYNGALSALARGPQFAFPMHNTKVTLTCNVVEHLFGSDSSASALSAAARLATQGALRDLATGQNSGTGIMEPVMNVIISIDEASLGAVVHDISSARGGHIISLDEEMPISTSIGGNDSPESEQVVIDVNKIYAPPDPFETPSVAGGLPIQASANQTRTITAKVPLKEMVGYLKHLRSLSAGRGTFVMHVDRFERMSAQRQKAVLAELHR</sequence>
<evidence type="ECO:0000255" key="1">
    <source>
        <dbReference type="HAMAP-Rule" id="MF_03059"/>
    </source>
</evidence>
<name>RRF2M_TALMQ</name>